<evidence type="ECO:0000255" key="1">
    <source>
        <dbReference type="HAMAP-Rule" id="MF_00067"/>
    </source>
</evidence>
<gene>
    <name evidence="1" type="primary">gmhA</name>
    <name type="ordered locus">PFLU_0933</name>
</gene>
<organism>
    <name type="scientific">Pseudomonas fluorescens (strain SBW25)</name>
    <dbReference type="NCBI Taxonomy" id="216595"/>
    <lineage>
        <taxon>Bacteria</taxon>
        <taxon>Pseudomonadati</taxon>
        <taxon>Pseudomonadota</taxon>
        <taxon>Gammaproteobacteria</taxon>
        <taxon>Pseudomonadales</taxon>
        <taxon>Pseudomonadaceae</taxon>
        <taxon>Pseudomonas</taxon>
    </lineage>
</organism>
<name>GMHA_PSEFS</name>
<feature type="chain" id="PRO_1000202423" description="Phosphoheptose isomerase">
    <location>
        <begin position="1"/>
        <end position="197"/>
    </location>
</feature>
<feature type="domain" description="SIS" evidence="1">
    <location>
        <begin position="36"/>
        <end position="197"/>
    </location>
</feature>
<feature type="binding site" evidence="1">
    <location>
        <begin position="51"/>
        <end position="53"/>
    </location>
    <ligand>
        <name>substrate</name>
    </ligand>
</feature>
<feature type="binding site" evidence="1">
    <location>
        <position position="60"/>
    </location>
    <ligand>
        <name>Zn(2+)</name>
        <dbReference type="ChEBI" id="CHEBI:29105"/>
    </ligand>
</feature>
<feature type="binding site" evidence="1">
    <location>
        <position position="64"/>
    </location>
    <ligand>
        <name>substrate</name>
    </ligand>
</feature>
<feature type="binding site" evidence="1">
    <location>
        <position position="64"/>
    </location>
    <ligand>
        <name>Zn(2+)</name>
        <dbReference type="ChEBI" id="CHEBI:29105"/>
    </ligand>
</feature>
<feature type="binding site" evidence="1">
    <location>
        <begin position="93"/>
        <end position="94"/>
    </location>
    <ligand>
        <name>substrate</name>
    </ligand>
</feature>
<feature type="binding site" evidence="1">
    <location>
        <begin position="119"/>
        <end position="121"/>
    </location>
    <ligand>
        <name>substrate</name>
    </ligand>
</feature>
<feature type="binding site" evidence="1">
    <location>
        <position position="124"/>
    </location>
    <ligand>
        <name>substrate</name>
    </ligand>
</feature>
<feature type="binding site" evidence="1">
    <location>
        <position position="174"/>
    </location>
    <ligand>
        <name>substrate</name>
    </ligand>
</feature>
<feature type="binding site" evidence="1">
    <location>
        <position position="174"/>
    </location>
    <ligand>
        <name>Zn(2+)</name>
        <dbReference type="ChEBI" id="CHEBI:29105"/>
    </ligand>
</feature>
<feature type="binding site" evidence="1">
    <location>
        <position position="182"/>
    </location>
    <ligand>
        <name>Zn(2+)</name>
        <dbReference type="ChEBI" id="CHEBI:29105"/>
    </ligand>
</feature>
<reference key="1">
    <citation type="journal article" date="2009" name="Genome Biol.">
        <title>Genomic and genetic analyses of diversity and plant interactions of Pseudomonas fluorescens.</title>
        <authorList>
            <person name="Silby M.W."/>
            <person name="Cerdeno-Tarraga A.M."/>
            <person name="Vernikos G.S."/>
            <person name="Giddens S.R."/>
            <person name="Jackson R.W."/>
            <person name="Preston G.M."/>
            <person name="Zhang X.-X."/>
            <person name="Moon C.D."/>
            <person name="Gehrig S.M."/>
            <person name="Godfrey S.A.C."/>
            <person name="Knight C.G."/>
            <person name="Malone J.G."/>
            <person name="Robinson Z."/>
            <person name="Spiers A.J."/>
            <person name="Harris S."/>
            <person name="Challis G.L."/>
            <person name="Yaxley A.M."/>
            <person name="Harris D."/>
            <person name="Seeger K."/>
            <person name="Murphy L."/>
            <person name="Rutter S."/>
            <person name="Squares R."/>
            <person name="Quail M.A."/>
            <person name="Saunders E."/>
            <person name="Mavromatis K."/>
            <person name="Brettin T.S."/>
            <person name="Bentley S.D."/>
            <person name="Hothersall J."/>
            <person name="Stephens E."/>
            <person name="Thomas C.M."/>
            <person name="Parkhill J."/>
            <person name="Levy S.B."/>
            <person name="Rainey P.B."/>
            <person name="Thomson N.R."/>
        </authorList>
    </citation>
    <scope>NUCLEOTIDE SEQUENCE [LARGE SCALE GENOMIC DNA]</scope>
    <source>
        <strain>SBW25</strain>
    </source>
</reference>
<keyword id="KW-0119">Carbohydrate metabolism</keyword>
<keyword id="KW-0963">Cytoplasm</keyword>
<keyword id="KW-0413">Isomerase</keyword>
<keyword id="KW-0479">Metal-binding</keyword>
<keyword id="KW-0862">Zinc</keyword>
<sequence>MDMQSRIRQLFQASIDTKQQAMDVLAPHIEQASQVMVNALLNEGKMLSCGNGGSAGDAQHFSSELLNRFERERPSLPAIALTTDSSTITSIANDYSYNEIFSKQIRALGQPGDVLLAISTSGNSANIIQAIQAAHDREMIVVALTGRDGGGMASLLLPEDVEIRVPANVTARIQEVHLLAIHCLCDLIDSQLFGSEE</sequence>
<dbReference type="EC" id="5.3.1.28" evidence="1"/>
<dbReference type="EMBL" id="AM181176">
    <property type="protein sequence ID" value="CAY47199.1"/>
    <property type="molecule type" value="Genomic_DNA"/>
</dbReference>
<dbReference type="RefSeq" id="WP_007904374.1">
    <property type="nucleotide sequence ID" value="NC_012660.1"/>
</dbReference>
<dbReference type="SMR" id="C3KBY0"/>
<dbReference type="STRING" id="294.SRM1_04734"/>
<dbReference type="eggNOG" id="COG0279">
    <property type="taxonomic scope" value="Bacteria"/>
</dbReference>
<dbReference type="HOGENOM" id="CLU_080999_3_1_6"/>
<dbReference type="OrthoDB" id="9810929at2"/>
<dbReference type="UniPathway" id="UPA00041">
    <property type="reaction ID" value="UER00436"/>
</dbReference>
<dbReference type="GO" id="GO:0005737">
    <property type="term" value="C:cytoplasm"/>
    <property type="evidence" value="ECO:0007669"/>
    <property type="project" value="UniProtKB-SubCell"/>
</dbReference>
<dbReference type="GO" id="GO:0097367">
    <property type="term" value="F:carbohydrate derivative binding"/>
    <property type="evidence" value="ECO:0007669"/>
    <property type="project" value="InterPro"/>
</dbReference>
<dbReference type="GO" id="GO:0008968">
    <property type="term" value="F:D-sedoheptulose 7-phosphate isomerase activity"/>
    <property type="evidence" value="ECO:0007669"/>
    <property type="project" value="UniProtKB-UniRule"/>
</dbReference>
<dbReference type="GO" id="GO:0008270">
    <property type="term" value="F:zinc ion binding"/>
    <property type="evidence" value="ECO:0007669"/>
    <property type="project" value="UniProtKB-UniRule"/>
</dbReference>
<dbReference type="GO" id="GO:0005975">
    <property type="term" value="P:carbohydrate metabolic process"/>
    <property type="evidence" value="ECO:0007669"/>
    <property type="project" value="UniProtKB-UniRule"/>
</dbReference>
<dbReference type="GO" id="GO:2001061">
    <property type="term" value="P:D-glycero-D-manno-heptose 7-phosphate biosynthetic process"/>
    <property type="evidence" value="ECO:0007669"/>
    <property type="project" value="UniProtKB-UniPathway"/>
</dbReference>
<dbReference type="CDD" id="cd05006">
    <property type="entry name" value="SIS_GmhA"/>
    <property type="match status" value="1"/>
</dbReference>
<dbReference type="Gene3D" id="3.40.50.10490">
    <property type="entry name" value="Glucose-6-phosphate isomerase like protein, domain 1"/>
    <property type="match status" value="1"/>
</dbReference>
<dbReference type="HAMAP" id="MF_00067">
    <property type="entry name" value="GmhA"/>
    <property type="match status" value="1"/>
</dbReference>
<dbReference type="InterPro" id="IPR035461">
    <property type="entry name" value="GmhA/DiaA"/>
</dbReference>
<dbReference type="InterPro" id="IPR004515">
    <property type="entry name" value="Phosphoheptose_Isoase"/>
</dbReference>
<dbReference type="InterPro" id="IPR001347">
    <property type="entry name" value="SIS_dom"/>
</dbReference>
<dbReference type="InterPro" id="IPR046348">
    <property type="entry name" value="SIS_dom_sf"/>
</dbReference>
<dbReference type="InterPro" id="IPR050099">
    <property type="entry name" value="SIS_GmhA/DiaA_subfam"/>
</dbReference>
<dbReference type="NCBIfam" id="NF010546">
    <property type="entry name" value="PRK13936.1"/>
    <property type="match status" value="1"/>
</dbReference>
<dbReference type="PANTHER" id="PTHR30390:SF6">
    <property type="entry name" value="DNAA INITIATOR-ASSOCIATING PROTEIN DIAA"/>
    <property type="match status" value="1"/>
</dbReference>
<dbReference type="PANTHER" id="PTHR30390">
    <property type="entry name" value="SEDOHEPTULOSE 7-PHOSPHATE ISOMERASE / DNAA INITIATOR-ASSOCIATING FACTOR FOR REPLICATION INITIATION"/>
    <property type="match status" value="1"/>
</dbReference>
<dbReference type="Pfam" id="PF13580">
    <property type="entry name" value="SIS_2"/>
    <property type="match status" value="1"/>
</dbReference>
<dbReference type="SUPFAM" id="SSF53697">
    <property type="entry name" value="SIS domain"/>
    <property type="match status" value="1"/>
</dbReference>
<dbReference type="PROSITE" id="PS51464">
    <property type="entry name" value="SIS"/>
    <property type="match status" value="1"/>
</dbReference>
<comment type="function">
    <text evidence="1">Catalyzes the isomerization of sedoheptulose 7-phosphate in D-glycero-D-manno-heptose 7-phosphate.</text>
</comment>
<comment type="catalytic activity">
    <reaction evidence="1">
        <text>2 D-sedoheptulose 7-phosphate = D-glycero-alpha-D-manno-heptose 7-phosphate + D-glycero-beta-D-manno-heptose 7-phosphate</text>
        <dbReference type="Rhea" id="RHEA:27489"/>
        <dbReference type="ChEBI" id="CHEBI:57483"/>
        <dbReference type="ChEBI" id="CHEBI:60203"/>
        <dbReference type="ChEBI" id="CHEBI:60204"/>
        <dbReference type="EC" id="5.3.1.28"/>
    </reaction>
</comment>
<comment type="cofactor">
    <cofactor evidence="1">
        <name>Zn(2+)</name>
        <dbReference type="ChEBI" id="CHEBI:29105"/>
    </cofactor>
    <text evidence="1">Binds 1 zinc ion per subunit.</text>
</comment>
<comment type="pathway">
    <text evidence="1">Carbohydrate biosynthesis; D-glycero-D-manno-heptose 7-phosphate biosynthesis; D-glycero-alpha-D-manno-heptose 7-phosphate and D-glycero-beta-D-manno-heptose 7-phosphate from sedoheptulose 7-phosphate: step 1/1.</text>
</comment>
<comment type="subunit">
    <text evidence="1">Homotetramer.</text>
</comment>
<comment type="subcellular location">
    <subcellularLocation>
        <location evidence="1">Cytoplasm</location>
    </subcellularLocation>
</comment>
<comment type="miscellaneous">
    <text evidence="1">The reaction produces a racemic mixture of D-glycero-alpha-D-manno-heptose 7-phosphate and D-glycero-beta-D-manno-heptose 7-phosphate.</text>
</comment>
<comment type="similarity">
    <text evidence="1">Belongs to the SIS family. GmhA subfamily.</text>
</comment>
<protein>
    <recommendedName>
        <fullName evidence="1">Phosphoheptose isomerase</fullName>
        <ecNumber evidence="1">5.3.1.28</ecNumber>
    </recommendedName>
    <alternativeName>
        <fullName evidence="1">Sedoheptulose 7-phosphate isomerase</fullName>
    </alternativeName>
</protein>
<accession>C3KBY0</accession>
<proteinExistence type="inferred from homology"/>